<proteinExistence type="inferred from homology"/>
<comment type="similarity">
    <text evidence="1">Belongs to the universal ribosomal protein uL16 family.</text>
</comment>
<sequence length="178" mass="20387">MPLRPGRCYRHFSGPAYTRKEYIPGIPQPKITKFTSGNPNGDYDYEVRLITTEIGQIRHNALEAVRTITLKTLTKRTGSETSFFMWILKYPHHVLRENKMMAFAGADRLQDGMRLSFGTPIGTAARIEKLGEILIVVKVKKEHLDFAKEALKIASKKLPLRTRIEIIPLRPIRQEVQS</sequence>
<evidence type="ECO:0000255" key="1">
    <source>
        <dbReference type="HAMAP-Rule" id="MF_00448"/>
    </source>
</evidence>
<evidence type="ECO:0000305" key="2"/>
<keyword id="KW-0687">Ribonucleoprotein</keyword>
<keyword id="KW-0689">Ribosomal protein</keyword>
<reference key="1">
    <citation type="journal article" date="2009" name="Proc. Natl. Acad. Sci. U.S.A.">
        <title>Biogeography of the Sulfolobus islandicus pan-genome.</title>
        <authorList>
            <person name="Reno M.L."/>
            <person name="Held N.L."/>
            <person name="Fields C.J."/>
            <person name="Burke P.V."/>
            <person name="Whitaker R.J."/>
        </authorList>
    </citation>
    <scope>NUCLEOTIDE SEQUENCE [LARGE SCALE GENOMIC DNA]</scope>
    <source>
        <strain>M.16.27</strain>
    </source>
</reference>
<dbReference type="EMBL" id="CP001401">
    <property type="protein sequence ID" value="ACP55795.1"/>
    <property type="molecule type" value="Genomic_DNA"/>
</dbReference>
<dbReference type="RefSeq" id="WP_012711781.1">
    <property type="nucleotide sequence ID" value="NC_012632.1"/>
</dbReference>
<dbReference type="SMR" id="C3MZG3"/>
<dbReference type="KEGG" id="sim:M1627_1924"/>
<dbReference type="HOGENOM" id="CLU_084051_0_2_2"/>
<dbReference type="Proteomes" id="UP000002307">
    <property type="component" value="Chromosome"/>
</dbReference>
<dbReference type="GO" id="GO:1990904">
    <property type="term" value="C:ribonucleoprotein complex"/>
    <property type="evidence" value="ECO:0007669"/>
    <property type="project" value="UniProtKB-KW"/>
</dbReference>
<dbReference type="GO" id="GO:0005840">
    <property type="term" value="C:ribosome"/>
    <property type="evidence" value="ECO:0007669"/>
    <property type="project" value="UniProtKB-KW"/>
</dbReference>
<dbReference type="GO" id="GO:0003735">
    <property type="term" value="F:structural constituent of ribosome"/>
    <property type="evidence" value="ECO:0007669"/>
    <property type="project" value="InterPro"/>
</dbReference>
<dbReference type="GO" id="GO:0006412">
    <property type="term" value="P:translation"/>
    <property type="evidence" value="ECO:0007669"/>
    <property type="project" value="UniProtKB-UniRule"/>
</dbReference>
<dbReference type="CDD" id="cd01433">
    <property type="entry name" value="Ribosomal_L16_L10e"/>
    <property type="match status" value="1"/>
</dbReference>
<dbReference type="FunFam" id="3.90.1170.10:FF:000008">
    <property type="entry name" value="50S ribosomal protein L10e"/>
    <property type="match status" value="1"/>
</dbReference>
<dbReference type="Gene3D" id="3.90.1170.10">
    <property type="entry name" value="Ribosomal protein L10e/L16"/>
    <property type="match status" value="1"/>
</dbReference>
<dbReference type="HAMAP" id="MF_00448">
    <property type="entry name" value="Ribosomal_uL16_arch"/>
    <property type="match status" value="1"/>
</dbReference>
<dbReference type="InterPro" id="IPR047873">
    <property type="entry name" value="Ribosomal_uL16"/>
</dbReference>
<dbReference type="InterPro" id="IPR022981">
    <property type="entry name" value="Ribosomal_uL16_arc"/>
</dbReference>
<dbReference type="InterPro" id="IPR018255">
    <property type="entry name" value="Ribosomal_uL16_CS_euk_arc"/>
</dbReference>
<dbReference type="InterPro" id="IPR016180">
    <property type="entry name" value="Ribosomal_uL16_dom"/>
</dbReference>
<dbReference type="InterPro" id="IPR001197">
    <property type="entry name" value="Ribosomal_uL16_euk_arch"/>
</dbReference>
<dbReference type="InterPro" id="IPR036920">
    <property type="entry name" value="Ribosomal_uL16_sf"/>
</dbReference>
<dbReference type="NCBIfam" id="NF003236">
    <property type="entry name" value="PRK04199.1-1"/>
    <property type="match status" value="1"/>
</dbReference>
<dbReference type="NCBIfam" id="NF003239">
    <property type="entry name" value="PRK04199.1-4"/>
    <property type="match status" value="1"/>
</dbReference>
<dbReference type="PANTHER" id="PTHR11726">
    <property type="entry name" value="60S RIBOSOMAL PROTEIN L10"/>
    <property type="match status" value="1"/>
</dbReference>
<dbReference type="Pfam" id="PF00252">
    <property type="entry name" value="Ribosomal_L16"/>
    <property type="match status" value="1"/>
</dbReference>
<dbReference type="PIRSF" id="PIRSF005590">
    <property type="entry name" value="Ribosomal_L10"/>
    <property type="match status" value="1"/>
</dbReference>
<dbReference type="SUPFAM" id="SSF54686">
    <property type="entry name" value="Ribosomal protein L16p/L10e"/>
    <property type="match status" value="1"/>
</dbReference>
<dbReference type="PROSITE" id="PS01257">
    <property type="entry name" value="RIBOSOMAL_L10E"/>
    <property type="match status" value="1"/>
</dbReference>
<accession>C3MZG3</accession>
<organism>
    <name type="scientific">Saccharolobus islandicus (strain M.16.27)</name>
    <name type="common">Sulfolobus islandicus</name>
    <dbReference type="NCBI Taxonomy" id="427318"/>
    <lineage>
        <taxon>Archaea</taxon>
        <taxon>Thermoproteota</taxon>
        <taxon>Thermoprotei</taxon>
        <taxon>Sulfolobales</taxon>
        <taxon>Sulfolobaceae</taxon>
        <taxon>Saccharolobus</taxon>
    </lineage>
</organism>
<name>RL10E_SACI3</name>
<feature type="chain" id="PRO_1000206198" description="Large ribosomal subunit protein uL16">
    <location>
        <begin position="1"/>
        <end position="178"/>
    </location>
</feature>
<gene>
    <name evidence="1" type="primary">rpl10e</name>
    <name type="ordered locus">M1627_1924</name>
</gene>
<protein>
    <recommendedName>
        <fullName evidence="1">Large ribosomal subunit protein uL16</fullName>
    </recommendedName>
    <alternativeName>
        <fullName evidence="2">50S ribosomal protein L10e</fullName>
    </alternativeName>
</protein>